<proteinExistence type="evidence at protein level"/>
<dbReference type="EMBL" id="AK004012">
    <property type="protein sequence ID" value="BAB23123.1"/>
    <property type="molecule type" value="mRNA"/>
</dbReference>
<dbReference type="EMBL" id="AK170205">
    <property type="protein sequence ID" value="BAE41635.1"/>
    <property type="molecule type" value="mRNA"/>
</dbReference>
<dbReference type="EMBL" id="AC122401">
    <property type="status" value="NOT_ANNOTATED_CDS"/>
    <property type="molecule type" value="Genomic_DNA"/>
</dbReference>
<dbReference type="EMBL" id="BC030376">
    <property type="protein sequence ID" value="AAH30376.1"/>
    <property type="molecule type" value="mRNA"/>
</dbReference>
<dbReference type="CCDS" id="CCDS49704.1">
    <molecule id="E9Q9D5-2"/>
</dbReference>
<dbReference type="RefSeq" id="NP_081093.2">
    <molecule id="E9Q9D5-2"/>
    <property type="nucleotide sequence ID" value="NM_026817.3"/>
</dbReference>
<dbReference type="SMR" id="E9Q9D5"/>
<dbReference type="BioGRID" id="213005">
    <property type="interactions" value="1"/>
</dbReference>
<dbReference type="FunCoup" id="E9Q9D5">
    <property type="interactions" value="955"/>
</dbReference>
<dbReference type="STRING" id="10090.ENSMUSP00000023294"/>
<dbReference type="PhosphoSitePlus" id="E9Q9D5"/>
<dbReference type="SwissPalm" id="E9Q9D5"/>
<dbReference type="PaxDb" id="10090-ENSMUSP00000023294"/>
<dbReference type="ProteomicsDB" id="300253">
    <molecule id="E9Q9D5-2"/>
</dbReference>
<dbReference type="ProteomicsDB" id="300254">
    <molecule id="E9Q9D5-1"/>
</dbReference>
<dbReference type="ProteomicsDB" id="300255">
    <molecule id="E9Q9D5-3"/>
</dbReference>
<dbReference type="Pumba" id="E9Q9D5"/>
<dbReference type="DNASU" id="68708"/>
<dbReference type="Ensembl" id="ENSMUST00000023294.15">
    <molecule id="E9Q9D5-2"/>
    <property type="protein sequence ID" value="ENSMUSP00000023294.9"/>
    <property type="gene ID" value="ENSMUSG00000022621.17"/>
</dbReference>
<dbReference type="Ensembl" id="ENSMUST00000094056.12">
    <molecule id="E9Q9D5-3"/>
    <property type="protein sequence ID" value="ENSMUSP00000091598.6"/>
    <property type="gene ID" value="ENSMUSG00000022621.17"/>
</dbReference>
<dbReference type="GeneID" id="68708"/>
<dbReference type="KEGG" id="mmu:68708"/>
<dbReference type="UCSC" id="uc007xhf.1">
    <molecule id="E9Q9D5-2"/>
    <property type="organism name" value="mouse"/>
</dbReference>
<dbReference type="UCSC" id="uc007xhg.1">
    <molecule id="E9Q9D5-3"/>
    <property type="organism name" value="mouse"/>
</dbReference>
<dbReference type="AGR" id="MGI:1915958"/>
<dbReference type="CTD" id="68708"/>
<dbReference type="MGI" id="MGI:1915958">
    <property type="gene designation" value="Rabl2"/>
</dbReference>
<dbReference type="VEuPathDB" id="HostDB:ENSMUSG00000022621"/>
<dbReference type="eggNOG" id="KOG0087">
    <property type="taxonomic scope" value="Eukaryota"/>
</dbReference>
<dbReference type="GeneTree" id="ENSGT00940000156551"/>
<dbReference type="HOGENOM" id="CLU_041217_13_1_1"/>
<dbReference type="InParanoid" id="E9Q9D5"/>
<dbReference type="OMA" id="YHEAHAC"/>
<dbReference type="OrthoDB" id="48625at2759"/>
<dbReference type="PhylomeDB" id="E9Q9D5"/>
<dbReference type="TreeFam" id="TF329398"/>
<dbReference type="BioGRID-ORCS" id="68708">
    <property type="hits" value="3 hits in 77 CRISPR screens"/>
</dbReference>
<dbReference type="PRO" id="PR:E9Q9D5"/>
<dbReference type="Proteomes" id="UP000000589">
    <property type="component" value="Chromosome 15"/>
</dbReference>
<dbReference type="RNAct" id="E9Q9D5">
    <property type="molecule type" value="protein"/>
</dbReference>
<dbReference type="Bgee" id="ENSMUSG00000022621">
    <property type="expression patterns" value="Expressed in manus and 224 other cell types or tissues"/>
</dbReference>
<dbReference type="ExpressionAtlas" id="E9Q9D5">
    <property type="expression patterns" value="baseline and differential"/>
</dbReference>
<dbReference type="GO" id="GO:0030992">
    <property type="term" value="C:intraciliary transport particle B"/>
    <property type="evidence" value="ECO:0000314"/>
    <property type="project" value="MGI"/>
</dbReference>
<dbReference type="GO" id="GO:0097225">
    <property type="term" value="C:sperm midpiece"/>
    <property type="evidence" value="ECO:0000314"/>
    <property type="project" value="MGI"/>
</dbReference>
<dbReference type="GO" id="GO:0005525">
    <property type="term" value="F:GTP binding"/>
    <property type="evidence" value="ECO:0000314"/>
    <property type="project" value="MGI"/>
</dbReference>
<dbReference type="GO" id="GO:0003924">
    <property type="term" value="F:GTPase activity"/>
    <property type="evidence" value="ECO:0007669"/>
    <property type="project" value="InterPro"/>
</dbReference>
<dbReference type="GO" id="GO:0060271">
    <property type="term" value="P:cilium assembly"/>
    <property type="evidence" value="ECO:0000315"/>
    <property type="project" value="MGI"/>
</dbReference>
<dbReference type="GO" id="GO:0030317">
    <property type="term" value="P:flagellated sperm motility"/>
    <property type="evidence" value="ECO:0000315"/>
    <property type="project" value="MGI"/>
</dbReference>
<dbReference type="GO" id="GO:0008594">
    <property type="term" value="P:photoreceptor cell morphogenesis"/>
    <property type="evidence" value="ECO:0000315"/>
    <property type="project" value="UniProtKB"/>
</dbReference>
<dbReference type="GO" id="GO:0007338">
    <property type="term" value="P:single fertilization"/>
    <property type="evidence" value="ECO:0000315"/>
    <property type="project" value="MGI"/>
</dbReference>
<dbReference type="CDD" id="cd04124">
    <property type="entry name" value="RabL2"/>
    <property type="match status" value="1"/>
</dbReference>
<dbReference type="FunFam" id="3.40.50.300:FF:000986">
    <property type="entry name" value="rab-like protein 2B isoform X4"/>
    <property type="match status" value="1"/>
</dbReference>
<dbReference type="Gene3D" id="3.40.50.300">
    <property type="entry name" value="P-loop containing nucleotide triphosphate hydrolases"/>
    <property type="match status" value="1"/>
</dbReference>
<dbReference type="InterPro" id="IPR027417">
    <property type="entry name" value="P-loop_NTPase"/>
</dbReference>
<dbReference type="InterPro" id="IPR041835">
    <property type="entry name" value="RabL2"/>
</dbReference>
<dbReference type="InterPro" id="IPR005225">
    <property type="entry name" value="Small_GTP-bd"/>
</dbReference>
<dbReference type="InterPro" id="IPR001806">
    <property type="entry name" value="Small_GTPase"/>
</dbReference>
<dbReference type="NCBIfam" id="TIGR00231">
    <property type="entry name" value="small_GTP"/>
    <property type="match status" value="1"/>
</dbReference>
<dbReference type="PANTHER" id="PTHR47978">
    <property type="match status" value="1"/>
</dbReference>
<dbReference type="Pfam" id="PF00071">
    <property type="entry name" value="Ras"/>
    <property type="match status" value="1"/>
</dbReference>
<dbReference type="PRINTS" id="PR00449">
    <property type="entry name" value="RASTRNSFRMNG"/>
</dbReference>
<dbReference type="SMART" id="SM00175">
    <property type="entry name" value="RAB"/>
    <property type="match status" value="1"/>
</dbReference>
<dbReference type="SMART" id="SM00176">
    <property type="entry name" value="RAN"/>
    <property type="match status" value="1"/>
</dbReference>
<dbReference type="SMART" id="SM00173">
    <property type="entry name" value="RAS"/>
    <property type="match status" value="1"/>
</dbReference>
<dbReference type="SMART" id="SM00174">
    <property type="entry name" value="RHO"/>
    <property type="match status" value="1"/>
</dbReference>
<dbReference type="SUPFAM" id="SSF52540">
    <property type="entry name" value="P-loop containing nucleoside triphosphate hydrolases"/>
    <property type="match status" value="1"/>
</dbReference>
<dbReference type="PROSITE" id="PS51419">
    <property type="entry name" value="RAB"/>
    <property type="match status" value="1"/>
</dbReference>
<keyword id="KW-0025">Alternative splicing</keyword>
<keyword id="KW-1186">Ciliopathy</keyword>
<keyword id="KW-0342">GTP-binding</keyword>
<keyword id="KW-0547">Nucleotide-binding</keyword>
<keyword id="KW-1185">Reference proteome</keyword>
<name>RBL2A_MOUSE</name>
<accession>E9Q9D5</accession>
<accession>Q3TDG7</accession>
<accession>Q8K2P9</accession>
<accession>Q9D133</accession>
<reference key="1">
    <citation type="journal article" date="2005" name="Science">
        <title>The transcriptional landscape of the mammalian genome.</title>
        <authorList>
            <person name="Carninci P."/>
            <person name="Kasukawa T."/>
            <person name="Katayama S."/>
            <person name="Gough J."/>
            <person name="Frith M.C."/>
            <person name="Maeda N."/>
            <person name="Oyama R."/>
            <person name="Ravasi T."/>
            <person name="Lenhard B."/>
            <person name="Wells C."/>
            <person name="Kodzius R."/>
            <person name="Shimokawa K."/>
            <person name="Bajic V.B."/>
            <person name="Brenner S.E."/>
            <person name="Batalov S."/>
            <person name="Forrest A.R."/>
            <person name="Zavolan M."/>
            <person name="Davis M.J."/>
            <person name="Wilming L.G."/>
            <person name="Aidinis V."/>
            <person name="Allen J.E."/>
            <person name="Ambesi-Impiombato A."/>
            <person name="Apweiler R."/>
            <person name="Aturaliya R.N."/>
            <person name="Bailey T.L."/>
            <person name="Bansal M."/>
            <person name="Baxter L."/>
            <person name="Beisel K.W."/>
            <person name="Bersano T."/>
            <person name="Bono H."/>
            <person name="Chalk A.M."/>
            <person name="Chiu K.P."/>
            <person name="Choudhary V."/>
            <person name="Christoffels A."/>
            <person name="Clutterbuck D.R."/>
            <person name="Crowe M.L."/>
            <person name="Dalla E."/>
            <person name="Dalrymple B.P."/>
            <person name="de Bono B."/>
            <person name="Della Gatta G."/>
            <person name="di Bernardo D."/>
            <person name="Down T."/>
            <person name="Engstrom P."/>
            <person name="Fagiolini M."/>
            <person name="Faulkner G."/>
            <person name="Fletcher C.F."/>
            <person name="Fukushima T."/>
            <person name="Furuno M."/>
            <person name="Futaki S."/>
            <person name="Gariboldi M."/>
            <person name="Georgii-Hemming P."/>
            <person name="Gingeras T.R."/>
            <person name="Gojobori T."/>
            <person name="Green R.E."/>
            <person name="Gustincich S."/>
            <person name="Harbers M."/>
            <person name="Hayashi Y."/>
            <person name="Hensch T.K."/>
            <person name="Hirokawa N."/>
            <person name="Hill D."/>
            <person name="Huminiecki L."/>
            <person name="Iacono M."/>
            <person name="Ikeo K."/>
            <person name="Iwama A."/>
            <person name="Ishikawa T."/>
            <person name="Jakt M."/>
            <person name="Kanapin A."/>
            <person name="Katoh M."/>
            <person name="Kawasawa Y."/>
            <person name="Kelso J."/>
            <person name="Kitamura H."/>
            <person name="Kitano H."/>
            <person name="Kollias G."/>
            <person name="Krishnan S.P."/>
            <person name="Kruger A."/>
            <person name="Kummerfeld S.K."/>
            <person name="Kurochkin I.V."/>
            <person name="Lareau L.F."/>
            <person name="Lazarevic D."/>
            <person name="Lipovich L."/>
            <person name="Liu J."/>
            <person name="Liuni S."/>
            <person name="McWilliam S."/>
            <person name="Madan Babu M."/>
            <person name="Madera M."/>
            <person name="Marchionni L."/>
            <person name="Matsuda H."/>
            <person name="Matsuzawa S."/>
            <person name="Miki H."/>
            <person name="Mignone F."/>
            <person name="Miyake S."/>
            <person name="Morris K."/>
            <person name="Mottagui-Tabar S."/>
            <person name="Mulder N."/>
            <person name="Nakano N."/>
            <person name="Nakauchi H."/>
            <person name="Ng P."/>
            <person name="Nilsson R."/>
            <person name="Nishiguchi S."/>
            <person name="Nishikawa S."/>
            <person name="Nori F."/>
            <person name="Ohara O."/>
            <person name="Okazaki Y."/>
            <person name="Orlando V."/>
            <person name="Pang K.C."/>
            <person name="Pavan W.J."/>
            <person name="Pavesi G."/>
            <person name="Pesole G."/>
            <person name="Petrovsky N."/>
            <person name="Piazza S."/>
            <person name="Reed J."/>
            <person name="Reid J.F."/>
            <person name="Ring B.Z."/>
            <person name="Ringwald M."/>
            <person name="Rost B."/>
            <person name="Ruan Y."/>
            <person name="Salzberg S.L."/>
            <person name="Sandelin A."/>
            <person name="Schneider C."/>
            <person name="Schoenbach C."/>
            <person name="Sekiguchi K."/>
            <person name="Semple C.A."/>
            <person name="Seno S."/>
            <person name="Sessa L."/>
            <person name="Sheng Y."/>
            <person name="Shibata Y."/>
            <person name="Shimada H."/>
            <person name="Shimada K."/>
            <person name="Silva D."/>
            <person name="Sinclair B."/>
            <person name="Sperling S."/>
            <person name="Stupka E."/>
            <person name="Sugiura K."/>
            <person name="Sultana R."/>
            <person name="Takenaka Y."/>
            <person name="Taki K."/>
            <person name="Tammoja K."/>
            <person name="Tan S.L."/>
            <person name="Tang S."/>
            <person name="Taylor M.S."/>
            <person name="Tegner J."/>
            <person name="Teichmann S.A."/>
            <person name="Ueda H.R."/>
            <person name="van Nimwegen E."/>
            <person name="Verardo R."/>
            <person name="Wei C.L."/>
            <person name="Yagi K."/>
            <person name="Yamanishi H."/>
            <person name="Zabarovsky E."/>
            <person name="Zhu S."/>
            <person name="Zimmer A."/>
            <person name="Hide W."/>
            <person name="Bult C."/>
            <person name="Grimmond S.M."/>
            <person name="Teasdale R.D."/>
            <person name="Liu E.T."/>
            <person name="Brusic V."/>
            <person name="Quackenbush J."/>
            <person name="Wahlestedt C."/>
            <person name="Mattick J.S."/>
            <person name="Hume D.A."/>
            <person name="Kai C."/>
            <person name="Sasaki D."/>
            <person name="Tomaru Y."/>
            <person name="Fukuda S."/>
            <person name="Kanamori-Katayama M."/>
            <person name="Suzuki M."/>
            <person name="Aoki J."/>
            <person name="Arakawa T."/>
            <person name="Iida J."/>
            <person name="Imamura K."/>
            <person name="Itoh M."/>
            <person name="Kato T."/>
            <person name="Kawaji H."/>
            <person name="Kawagashira N."/>
            <person name="Kawashima T."/>
            <person name="Kojima M."/>
            <person name="Kondo S."/>
            <person name="Konno H."/>
            <person name="Nakano K."/>
            <person name="Ninomiya N."/>
            <person name="Nishio T."/>
            <person name="Okada M."/>
            <person name="Plessy C."/>
            <person name="Shibata K."/>
            <person name="Shiraki T."/>
            <person name="Suzuki S."/>
            <person name="Tagami M."/>
            <person name="Waki K."/>
            <person name="Watahiki A."/>
            <person name="Okamura-Oho Y."/>
            <person name="Suzuki H."/>
            <person name="Kawai J."/>
            <person name="Hayashizaki Y."/>
        </authorList>
    </citation>
    <scope>NUCLEOTIDE SEQUENCE [LARGE SCALE MRNA] (ISOFORMS 1 AND 3)</scope>
    <source>
        <strain>C57BL/6J</strain>
        <strain>NOD</strain>
    </source>
</reference>
<reference key="2">
    <citation type="journal article" date="2009" name="PLoS Biol.">
        <title>Lineage-specific biology revealed by a finished genome assembly of the mouse.</title>
        <authorList>
            <person name="Church D.M."/>
            <person name="Goodstadt L."/>
            <person name="Hillier L.W."/>
            <person name="Zody M.C."/>
            <person name="Goldstein S."/>
            <person name="She X."/>
            <person name="Bult C.J."/>
            <person name="Agarwala R."/>
            <person name="Cherry J.L."/>
            <person name="DiCuccio M."/>
            <person name="Hlavina W."/>
            <person name="Kapustin Y."/>
            <person name="Meric P."/>
            <person name="Maglott D."/>
            <person name="Birtle Z."/>
            <person name="Marques A.C."/>
            <person name="Graves T."/>
            <person name="Zhou S."/>
            <person name="Teague B."/>
            <person name="Potamousis K."/>
            <person name="Churas C."/>
            <person name="Place M."/>
            <person name="Herschleb J."/>
            <person name="Runnheim R."/>
            <person name="Forrest D."/>
            <person name="Amos-Landgraf J."/>
            <person name="Schwartz D.C."/>
            <person name="Cheng Z."/>
            <person name="Lindblad-Toh K."/>
            <person name="Eichler E.E."/>
            <person name="Ponting C.P."/>
        </authorList>
    </citation>
    <scope>NUCLEOTIDE SEQUENCE [LARGE SCALE GENOMIC DNA]</scope>
    <source>
        <strain>C57BL/6J</strain>
    </source>
</reference>
<reference key="3">
    <citation type="journal article" date="2004" name="Genome Res.">
        <title>The status, quality, and expansion of the NIH full-length cDNA project: the Mammalian Gene Collection (MGC).</title>
        <authorList>
            <consortium name="The MGC Project Team"/>
        </authorList>
    </citation>
    <scope>NUCLEOTIDE SEQUENCE [LARGE SCALE MRNA] (ISOFORM 2)</scope>
    <source>
        <strain>FVB/N-3</strain>
        <tissue>Mammary tumor</tissue>
    </source>
</reference>
<reference key="4">
    <citation type="journal article" date="2010" name="Cell">
        <title>A tissue-specific atlas of mouse protein phosphorylation and expression.</title>
        <authorList>
            <person name="Huttlin E.L."/>
            <person name="Jedrychowski M.P."/>
            <person name="Elias J.E."/>
            <person name="Goswami T."/>
            <person name="Rad R."/>
            <person name="Beausoleil S.A."/>
            <person name="Villen J."/>
            <person name="Haas W."/>
            <person name="Sowa M.E."/>
            <person name="Gygi S.P."/>
        </authorList>
    </citation>
    <scope>IDENTIFICATION BY MASS SPECTROMETRY [LARGE SCALE ANALYSIS]</scope>
    <source>
        <tissue>Testis</tissue>
    </source>
</reference>
<reference key="5">
    <citation type="journal article" date="2012" name="PLoS Genet.">
        <title>RAB-like 2 has an essential role in male fertility, sperm intra-flagellar transport, and tail assembly.</title>
        <authorList>
            <person name="Lo J.C."/>
            <person name="Jamsai D."/>
            <person name="O'Connor A.E."/>
            <person name="Borg C."/>
            <person name="Clark B.J."/>
            <person name="Whisstock J.C."/>
            <person name="Field M.C."/>
            <person name="Adams V."/>
            <person name="Ishikawa T."/>
            <person name="Aitken R.J."/>
            <person name="Whittle B."/>
            <person name="Goodnow C.C."/>
            <person name="Ormandy C.J."/>
            <person name="O'Bryan M.K."/>
        </authorList>
    </citation>
    <scope>FUNCTION</scope>
    <scope>TISSUE SPECIFICITY</scope>
    <scope>INTERACTION WITH IFT27; IFT81; IFT172; ATP6V1E1; HK1; LDHC; MAPRE1 AND HSPA2</scope>
    <scope>MUTAGENESIS OF ASP-73</scope>
</reference>
<reference key="6">
    <citation type="journal article" date="2017" name="Dev. Cell">
        <title>The CEP19-RABL2 GTPase complex binds IFT-B to initiate intraflagellar transport at the ciliary base.</title>
        <authorList>
            <person name="Kanie T."/>
            <person name="Abbott K.L."/>
            <person name="Mooney N.A."/>
            <person name="Plowey E.D."/>
            <person name="Demeter J."/>
            <person name="Jackson P.K."/>
        </authorList>
    </citation>
    <scope>DISRUPTION PHENOTYPE</scope>
</reference>
<protein>
    <recommendedName>
        <fullName>Rab-like protein 2A</fullName>
    </recommendedName>
</protein>
<feature type="chain" id="PRO_0000424709" description="Rab-like protein 2A">
    <location>
        <begin position="1"/>
        <end position="223"/>
    </location>
</feature>
<feature type="region of interest" description="Disordered" evidence="2">
    <location>
        <begin position="200"/>
        <end position="223"/>
    </location>
</feature>
<feature type="compositionally biased region" description="Polar residues" evidence="2">
    <location>
        <begin position="210"/>
        <end position="223"/>
    </location>
</feature>
<feature type="binding site" evidence="1">
    <location>
        <begin position="28"/>
        <end position="35"/>
    </location>
    <ligand>
        <name>GTP</name>
        <dbReference type="ChEBI" id="CHEBI:37565"/>
    </ligand>
</feature>
<feature type="binding site" evidence="1">
    <location>
        <begin position="76"/>
        <end position="80"/>
    </location>
    <ligand>
        <name>GTP</name>
        <dbReference type="ChEBI" id="CHEBI:37565"/>
    </ligand>
</feature>
<feature type="binding site" evidence="1">
    <location>
        <begin position="133"/>
        <end position="136"/>
    </location>
    <ligand>
        <name>GTP</name>
        <dbReference type="ChEBI" id="CHEBI:37565"/>
    </ligand>
</feature>
<feature type="splice variant" id="VSP_053487" description="In isoform 3." evidence="5">
    <original>LMERFLMDGFQPQQLSTYALTLYKHTATVDGKTILVDFWDTAGQERFQSMHASYYHKAHACIMVFDVQRKITYKNLGTWYAELREFRPEIPCILVANKID</original>
    <variation>YLMSRGKSPIRTWVP</variation>
    <location>
        <begin position="37"/>
        <end position="136"/>
    </location>
</feature>
<feature type="splice variant" id="VSP_053488" description="In isoform 1." evidence="5">
    <original>D</original>
    <variation>DGGASLHLGDSNSWGPSTTHFLLSKNGPPLFPFPRCSLSSREASSETLSSQDTDPYYPCQGQSLTVPSPLTLPPNSSHCLGGQANAPLLSA</variation>
    <location>
        <position position="136"/>
    </location>
</feature>
<feature type="splice variant" id="VSP_053489" description="In isoform 1." evidence="5">
    <original>LFNDAIRLAVAYKESSQDFMDEVLQELENFK</original>
    <variation>NFE</variation>
    <location>
        <begin position="170"/>
        <end position="200"/>
    </location>
</feature>
<feature type="mutagenesis site" description="In Mot; male sterility characterized by reduced sperm output, and sperm with aberrant motility and short tails." evidence="3">
    <original>D</original>
    <variation>G</variation>
    <location>
        <position position="73"/>
    </location>
</feature>
<feature type="sequence conflict" description="In Ref. 3; AAH30376." evidence="6" ref="3">
    <original>N</original>
    <variation>S</variation>
    <location>
        <position position="6"/>
    </location>
</feature>
<feature type="sequence conflict" description="In Ref. 3; AAH30376." evidence="6" ref="3">
    <original>S</original>
    <variation>G</variation>
    <location>
        <position position="214"/>
    </location>
</feature>
<feature type="sequence conflict" description="In Ref. 1; BAE41635." evidence="6" ref="1">
    <original>D</original>
    <variation>G</variation>
    <location>
        <position position="215"/>
    </location>
</feature>
<comment type="function">
    <text evidence="3">Plays an essential role in male fertility, sperm intra-flagellar transport, and tail assembly. Binds, in a GTP-regulated manner, to a specific set of effector proteins including key proteins involved in cilia development and function and delivers them into the growing sperm tail.</text>
</comment>
<comment type="subunit">
    <text evidence="3">Interacts with IFT27, IFT81, IFT172, ATP6V1E1, HK1, LDHC, MAPRE1 and HSPA2.</text>
</comment>
<comment type="alternative products">
    <event type="alternative splicing"/>
    <isoform>
        <id>E9Q9D5-2</id>
        <name>2</name>
        <sequence type="displayed"/>
    </isoform>
    <isoform>
        <id>E9Q9D5-1</id>
        <name>1</name>
        <sequence type="described" ref="VSP_053488 VSP_053489"/>
    </isoform>
    <isoform>
        <id>E9Q9D5-3</id>
        <name>3</name>
        <sequence type="described" ref="VSP_053487"/>
    </isoform>
</comment>
<comment type="tissue specificity">
    <text evidence="3">Isoform 2 is expressed in the testis and localizes to the mid-piece of the sperm tail (at protein level). Isoform 2 is expressed at higher levels in testis than isoform 1. Isoform 1 and isoform 2 are widely expressed and notably within other tissues containing motile cilia including the lung, trachea, brain, ovary and kidney.</text>
</comment>
<comment type="disruption phenotype">
    <text evidence="4">Exhibits phenotypes characteristic of ciliopathies. Pre-axial polydactyly. Retinal degeneration, characterized by loss of the outer nuclear layer that contains the cell body of photoreceptor cells.</text>
</comment>
<comment type="similarity">
    <text evidence="6">Belongs to the small GTPase superfamily. Rab family.</text>
</comment>
<organism>
    <name type="scientific">Mus musculus</name>
    <name type="common">Mouse</name>
    <dbReference type="NCBI Taxonomy" id="10090"/>
    <lineage>
        <taxon>Eukaryota</taxon>
        <taxon>Metazoa</taxon>
        <taxon>Chordata</taxon>
        <taxon>Craniata</taxon>
        <taxon>Vertebrata</taxon>
        <taxon>Euteleostomi</taxon>
        <taxon>Mammalia</taxon>
        <taxon>Eutheria</taxon>
        <taxon>Euarchontoglires</taxon>
        <taxon>Glires</taxon>
        <taxon>Rodentia</taxon>
        <taxon>Myomorpha</taxon>
        <taxon>Muroidea</taxon>
        <taxon>Muridae</taxon>
        <taxon>Murinae</taxon>
        <taxon>Mus</taxon>
        <taxon>Mus</taxon>
    </lineage>
</organism>
<sequence>MAGDRNRHCELEQEKYDTHENVKIICLGDSAVGKSKLMERFLMDGFQPQQLSTYALTLYKHTATVDGKTILVDFWDTAGQERFQSMHASYYHKAHACIMVFDVQRKITYKNLGTWYAELREFRPEIPCILVANKIDADIQMTQKNFSFAKKFSLPLYFVSAADGTNVVKLFNDAIRLAVAYKESSQDFMDEVLQELENFKLEQKEEDTSGQEQSDTTKSPSPS</sequence>
<gene>
    <name type="primary">Rabl2</name>
    <name type="synonym">Rabl2a</name>
</gene>
<evidence type="ECO:0000250" key="1"/>
<evidence type="ECO:0000256" key="2">
    <source>
        <dbReference type="SAM" id="MobiDB-lite"/>
    </source>
</evidence>
<evidence type="ECO:0000269" key="3">
    <source>
    </source>
</evidence>
<evidence type="ECO:0000269" key="4">
    <source>
    </source>
</evidence>
<evidence type="ECO:0000303" key="5">
    <source>
    </source>
</evidence>
<evidence type="ECO:0000305" key="6"/>